<name>APGM_AQUAE</name>
<proteinExistence type="inferred from homology"/>
<sequence>MDVISELVKKNGSKILLIVLDGLGGLPVKEGKTELELAKTPNLDKLVKNSATGLHIPVDWGITPGSGPGHLGLFGYDPIKYQIGRGILEALGLGIDVKDTDIAVRGNYATVEYRNGKPIVVDRRAGRIPTEENKRITAKLQEAIKEIDGVQVIIKPGMEHRLAIVFRFPEKLSPGSDAINDTDPQQVGKEPLEPKGENPNAEKVAEVVRKFIQRATEILRNEPKANYILLRGFSQKPDIPTMEERFGVKPCCIAVYPMYKGLASLVGMDVIEFEGSTIQDEIDTLKKVWNEYDYFFVHIKKTDSYGEDGNYEGKVSVIEDFDAHLPQFLELKPDVLAITGDHSTPSILKGHSWHPVPLLIHSPYVLGGTSERFTERECLKGELGIIPAVKITQLLLANALRLKKYGA</sequence>
<dbReference type="EC" id="5.4.2.12" evidence="1"/>
<dbReference type="EMBL" id="AE000657">
    <property type="protein sequence ID" value="AAC06791.1"/>
    <property type="molecule type" value="Genomic_DNA"/>
</dbReference>
<dbReference type="PIR" id="H70348">
    <property type="entry name" value="H70348"/>
</dbReference>
<dbReference type="RefSeq" id="NP_213380.1">
    <property type="nucleotide sequence ID" value="NC_000918.1"/>
</dbReference>
<dbReference type="RefSeq" id="WP_010880318.1">
    <property type="nucleotide sequence ID" value="NC_000918.1"/>
</dbReference>
<dbReference type="SMR" id="O66820"/>
<dbReference type="STRING" id="224324.aq_542"/>
<dbReference type="DNASU" id="1193238"/>
<dbReference type="EnsemblBacteria" id="AAC06791">
    <property type="protein sequence ID" value="AAC06791"/>
    <property type="gene ID" value="aq_542"/>
</dbReference>
<dbReference type="KEGG" id="aae:aq_542"/>
<dbReference type="PATRIC" id="fig|224324.8.peg.445"/>
<dbReference type="eggNOG" id="COG3635">
    <property type="taxonomic scope" value="Bacteria"/>
</dbReference>
<dbReference type="HOGENOM" id="CLU_034906_2_0_0"/>
<dbReference type="InParanoid" id="O66820"/>
<dbReference type="OrthoDB" id="9804453at2"/>
<dbReference type="UniPathway" id="UPA00109">
    <property type="reaction ID" value="UER00186"/>
</dbReference>
<dbReference type="Proteomes" id="UP000000798">
    <property type="component" value="Chromosome"/>
</dbReference>
<dbReference type="GO" id="GO:0046872">
    <property type="term" value="F:metal ion binding"/>
    <property type="evidence" value="ECO:0007669"/>
    <property type="project" value="InterPro"/>
</dbReference>
<dbReference type="GO" id="GO:0004619">
    <property type="term" value="F:phosphoglycerate mutase activity"/>
    <property type="evidence" value="ECO:0007669"/>
    <property type="project" value="UniProtKB-EC"/>
</dbReference>
<dbReference type="GO" id="GO:0006096">
    <property type="term" value="P:glycolytic process"/>
    <property type="evidence" value="ECO:0007669"/>
    <property type="project" value="UniProtKB-UniRule"/>
</dbReference>
<dbReference type="CDD" id="cd16011">
    <property type="entry name" value="iPGM_like"/>
    <property type="match status" value="1"/>
</dbReference>
<dbReference type="Gene3D" id="3.40.720.10">
    <property type="entry name" value="Alkaline Phosphatase, subunit A"/>
    <property type="match status" value="2"/>
</dbReference>
<dbReference type="HAMAP" id="MF_01402_B">
    <property type="entry name" value="ApgM_B"/>
    <property type="match status" value="1"/>
</dbReference>
<dbReference type="InterPro" id="IPR017850">
    <property type="entry name" value="Alkaline_phosphatase_core_sf"/>
</dbReference>
<dbReference type="InterPro" id="IPR023665">
    <property type="entry name" value="ApgAM_prokaryotes"/>
</dbReference>
<dbReference type="InterPro" id="IPR006124">
    <property type="entry name" value="Metalloenzyme"/>
</dbReference>
<dbReference type="InterPro" id="IPR004456">
    <property type="entry name" value="Pglycerate_mutase_ApgM"/>
</dbReference>
<dbReference type="NCBIfam" id="TIGR00306">
    <property type="entry name" value="apgM"/>
    <property type="match status" value="1"/>
</dbReference>
<dbReference type="NCBIfam" id="NF003160">
    <property type="entry name" value="PRK04135.1"/>
    <property type="match status" value="1"/>
</dbReference>
<dbReference type="PANTHER" id="PTHR31209">
    <property type="entry name" value="COFACTOR-INDEPENDENT PHOSPHOGLYCERATE MUTASE"/>
    <property type="match status" value="1"/>
</dbReference>
<dbReference type="PANTHER" id="PTHR31209:SF0">
    <property type="entry name" value="METALLOENZYME DOMAIN-CONTAINING PROTEIN"/>
    <property type="match status" value="1"/>
</dbReference>
<dbReference type="Pfam" id="PF01676">
    <property type="entry name" value="Metalloenzyme"/>
    <property type="match status" value="1"/>
</dbReference>
<dbReference type="Pfam" id="PF10143">
    <property type="entry name" value="PhosphMutase"/>
    <property type="match status" value="1"/>
</dbReference>
<dbReference type="PIRSF" id="PIRSF006392">
    <property type="entry name" value="IPGAM_arch"/>
    <property type="match status" value="1"/>
</dbReference>
<dbReference type="SUPFAM" id="SSF53649">
    <property type="entry name" value="Alkaline phosphatase-like"/>
    <property type="match status" value="1"/>
</dbReference>
<organism>
    <name type="scientific">Aquifex aeolicus (strain VF5)</name>
    <dbReference type="NCBI Taxonomy" id="224324"/>
    <lineage>
        <taxon>Bacteria</taxon>
        <taxon>Pseudomonadati</taxon>
        <taxon>Aquificota</taxon>
        <taxon>Aquificia</taxon>
        <taxon>Aquificales</taxon>
        <taxon>Aquificaceae</taxon>
        <taxon>Aquifex</taxon>
    </lineage>
</organism>
<feature type="chain" id="PRO_0000138152" description="Probable 2,3-bisphosphoglycerate-independent phosphoglycerate mutase">
    <location>
        <begin position="1"/>
        <end position="407"/>
    </location>
</feature>
<feature type="region of interest" description="Disordered" evidence="2">
    <location>
        <begin position="175"/>
        <end position="200"/>
    </location>
</feature>
<protein>
    <recommendedName>
        <fullName evidence="1">Probable 2,3-bisphosphoglycerate-independent phosphoglycerate mutase</fullName>
        <shortName evidence="1">BPG-independent PGAM</shortName>
        <shortName evidence="1">Phosphoglyceromutase</shortName>
        <shortName evidence="1">aPGAM</shortName>
        <ecNumber evidence="1">5.4.2.12</ecNumber>
    </recommendedName>
</protein>
<keyword id="KW-0324">Glycolysis</keyword>
<keyword id="KW-0413">Isomerase</keyword>
<keyword id="KW-1185">Reference proteome</keyword>
<comment type="function">
    <text evidence="1">Catalyzes the interconversion of 2-phosphoglycerate and 3-phosphoglycerate.</text>
</comment>
<comment type="catalytic activity">
    <reaction evidence="1">
        <text>(2R)-2-phosphoglycerate = (2R)-3-phosphoglycerate</text>
        <dbReference type="Rhea" id="RHEA:15901"/>
        <dbReference type="ChEBI" id="CHEBI:58272"/>
        <dbReference type="ChEBI" id="CHEBI:58289"/>
        <dbReference type="EC" id="5.4.2.12"/>
    </reaction>
</comment>
<comment type="pathway">
    <text evidence="1">Carbohydrate degradation; glycolysis; pyruvate from D-glyceraldehyde 3-phosphate: step 3/5.</text>
</comment>
<comment type="similarity">
    <text evidence="1">Belongs to the BPG-independent phosphoglycerate mutase family. A-PGAM subfamily.</text>
</comment>
<reference key="1">
    <citation type="journal article" date="1998" name="Nature">
        <title>The complete genome of the hyperthermophilic bacterium Aquifex aeolicus.</title>
        <authorList>
            <person name="Deckert G."/>
            <person name="Warren P.V."/>
            <person name="Gaasterland T."/>
            <person name="Young W.G."/>
            <person name="Lenox A.L."/>
            <person name="Graham D.E."/>
            <person name="Overbeek R."/>
            <person name="Snead M.A."/>
            <person name="Keller M."/>
            <person name="Aujay M."/>
            <person name="Huber R."/>
            <person name="Feldman R.A."/>
            <person name="Short J.M."/>
            <person name="Olsen G.J."/>
            <person name="Swanson R.V."/>
        </authorList>
    </citation>
    <scope>NUCLEOTIDE SEQUENCE [LARGE SCALE GENOMIC DNA]</scope>
    <source>
        <strain>VF5</strain>
    </source>
</reference>
<accession>O66820</accession>
<evidence type="ECO:0000255" key="1">
    <source>
        <dbReference type="HAMAP-Rule" id="MF_01402"/>
    </source>
</evidence>
<evidence type="ECO:0000256" key="2">
    <source>
        <dbReference type="SAM" id="MobiDB-lite"/>
    </source>
</evidence>
<gene>
    <name evidence="1" type="primary">apgM</name>
    <name type="ordered locus">aq_542</name>
</gene>